<name>TCMO_STRGA</name>
<organism>
    <name type="scientific">Streptomyces glaucescens</name>
    <dbReference type="NCBI Taxonomy" id="1907"/>
    <lineage>
        <taxon>Bacteria</taxon>
        <taxon>Bacillati</taxon>
        <taxon>Actinomycetota</taxon>
        <taxon>Actinomycetes</taxon>
        <taxon>Kitasatosporales</taxon>
        <taxon>Streptomycetaceae</taxon>
        <taxon>Streptomyces</taxon>
    </lineage>
</organism>
<reference key="1">
    <citation type="journal article" date="1992" name="J. Bacteriol.">
        <title>Nucleotide sequence of the tcmII-tcmIV region of the tetracenomycin C biosynthetic gene cluster of Streptomyces glaucescens and evidence that the tcmN gene encodes a multifunctional cyclase-dehydratase-O-methyl transferase.</title>
        <authorList>
            <person name="Summers R.G."/>
            <person name="Wendt-Pienkowski E."/>
            <person name="Motamedi H."/>
            <person name="Hutchinson C.R."/>
        </authorList>
    </citation>
    <scope>NUCLEOTIDE SEQUENCE [GENOMIC DNA]</scope>
    <source>
        <strain>DSM 40716 / ETH 22794 / Tue 49</strain>
    </source>
</reference>
<protein>
    <recommendedName>
        <fullName>Tetracenomycin polyketide synthesis 8-O-methyl transferase TcmO</fullName>
        <ecNumber>2.1.1.-</ecNumber>
    </recommendedName>
</protein>
<keyword id="KW-0045">Antibiotic biosynthesis</keyword>
<keyword id="KW-0489">Methyltransferase</keyword>
<keyword id="KW-0949">S-adenosyl-L-methionine</keyword>
<keyword id="KW-0808">Transferase</keyword>
<proteinExistence type="inferred from homology"/>
<evidence type="ECO:0000255" key="1">
    <source>
        <dbReference type="PROSITE-ProRule" id="PRU01020"/>
    </source>
</evidence>
<comment type="pathway">
    <text>Antibiotic biosynthesis; tetracenomycin C biosynthesis.</text>
</comment>
<comment type="similarity">
    <text evidence="1">Belongs to the class I-like SAM-binding methyltransferase superfamily. Cation-independent O-methyltransferase family.</text>
</comment>
<feature type="chain" id="PRO_0000072457" description="Tetracenomycin polyketide synthesis 8-O-methyl transferase TcmO">
    <location>
        <begin position="1"/>
        <end position="339"/>
    </location>
</feature>
<feature type="active site" description="Proton acceptor" evidence="1">
    <location>
        <position position="246"/>
    </location>
</feature>
<feature type="binding site" evidence="1">
    <location>
        <position position="200"/>
    </location>
    <ligand>
        <name>S-adenosyl-L-methionine</name>
        <dbReference type="ChEBI" id="CHEBI:59789"/>
    </ligand>
</feature>
<feature type="binding site" evidence="1">
    <location>
        <begin position="226"/>
        <end position="228"/>
    </location>
    <ligand>
        <name>S-adenosyl-L-methionine</name>
        <dbReference type="ChEBI" id="CHEBI:59789"/>
    </ligand>
</feature>
<gene>
    <name type="primary">tcmO</name>
</gene>
<accession>P39896</accession>
<dbReference type="EC" id="2.1.1.-"/>
<dbReference type="EMBL" id="M80674">
    <property type="protein sequence ID" value="AAA67519.1"/>
    <property type="molecule type" value="Genomic_DNA"/>
</dbReference>
<dbReference type="PIR" id="C42276">
    <property type="entry name" value="C42276"/>
</dbReference>
<dbReference type="RefSeq" id="WP_043504920.1">
    <property type="nucleotide sequence ID" value="NZ_CP009438.1"/>
</dbReference>
<dbReference type="SMR" id="P39896"/>
<dbReference type="STRING" id="1907.SGLAU_26375"/>
<dbReference type="eggNOG" id="COG2345">
    <property type="taxonomic scope" value="Bacteria"/>
</dbReference>
<dbReference type="OrthoDB" id="582216at2"/>
<dbReference type="BioCyc" id="MetaCyc:MONOMER-18605"/>
<dbReference type="UniPathway" id="UPA00174"/>
<dbReference type="GO" id="GO:0008171">
    <property type="term" value="F:O-methyltransferase activity"/>
    <property type="evidence" value="ECO:0007669"/>
    <property type="project" value="InterPro"/>
</dbReference>
<dbReference type="GO" id="GO:0046983">
    <property type="term" value="F:protein dimerization activity"/>
    <property type="evidence" value="ECO:0007669"/>
    <property type="project" value="InterPro"/>
</dbReference>
<dbReference type="GO" id="GO:0017000">
    <property type="term" value="P:antibiotic biosynthetic process"/>
    <property type="evidence" value="ECO:0007669"/>
    <property type="project" value="UniProtKB-KW"/>
</dbReference>
<dbReference type="GO" id="GO:0032259">
    <property type="term" value="P:methylation"/>
    <property type="evidence" value="ECO:0007669"/>
    <property type="project" value="UniProtKB-KW"/>
</dbReference>
<dbReference type="CDD" id="cd02440">
    <property type="entry name" value="AdoMet_MTases"/>
    <property type="match status" value="1"/>
</dbReference>
<dbReference type="Gene3D" id="3.40.50.150">
    <property type="entry name" value="Vaccinia Virus protein VP39"/>
    <property type="match status" value="1"/>
</dbReference>
<dbReference type="Gene3D" id="1.10.10.10">
    <property type="entry name" value="Winged helix-like DNA-binding domain superfamily/Winged helix DNA-binding domain"/>
    <property type="match status" value="1"/>
</dbReference>
<dbReference type="InterPro" id="IPR016461">
    <property type="entry name" value="COMT-like"/>
</dbReference>
<dbReference type="InterPro" id="IPR001077">
    <property type="entry name" value="O_MeTrfase_dom"/>
</dbReference>
<dbReference type="InterPro" id="IPR012967">
    <property type="entry name" value="Plant_O-MeTrfase_dimerisation"/>
</dbReference>
<dbReference type="InterPro" id="IPR029063">
    <property type="entry name" value="SAM-dependent_MTases_sf"/>
</dbReference>
<dbReference type="InterPro" id="IPR036388">
    <property type="entry name" value="WH-like_DNA-bd_sf"/>
</dbReference>
<dbReference type="InterPro" id="IPR036390">
    <property type="entry name" value="WH_DNA-bd_sf"/>
</dbReference>
<dbReference type="PANTHER" id="PTHR43712:SF2">
    <property type="entry name" value="O-METHYLTRANSFERASE CICE"/>
    <property type="match status" value="1"/>
</dbReference>
<dbReference type="PANTHER" id="PTHR43712">
    <property type="entry name" value="PUTATIVE (AFU_ORTHOLOGUE AFUA_4G14580)-RELATED"/>
    <property type="match status" value="1"/>
</dbReference>
<dbReference type="Pfam" id="PF08100">
    <property type="entry name" value="Dimerisation"/>
    <property type="match status" value="1"/>
</dbReference>
<dbReference type="Pfam" id="PF00891">
    <property type="entry name" value="Methyltransf_2"/>
    <property type="match status" value="1"/>
</dbReference>
<dbReference type="PIRSF" id="PIRSF005739">
    <property type="entry name" value="O-mtase"/>
    <property type="match status" value="1"/>
</dbReference>
<dbReference type="SUPFAM" id="SSF53335">
    <property type="entry name" value="S-adenosyl-L-methionine-dependent methyltransferases"/>
    <property type="match status" value="1"/>
</dbReference>
<dbReference type="SUPFAM" id="SSF46785">
    <property type="entry name" value="Winged helix' DNA-binding domain"/>
    <property type="match status" value="1"/>
</dbReference>
<dbReference type="PROSITE" id="PS51683">
    <property type="entry name" value="SAM_OMT_II"/>
    <property type="match status" value="1"/>
</dbReference>
<sequence length="339" mass="37035">MTPHTHVRGPGDILQLTMAFYGSRALISAVELDLFTLLAGKPLPLGELCERAGIHPRGARDFLDALVALGLLEREGEDTYRNSPAADRHLDRRKPGYVGGYARLADTKLFPVWARLTEALRTGEKQVPSQGGFFGGYADPEAARGFLGAMDAVNGGVGHSLAGALDWTEYSSFVDLGGARGNLAAHLHRAHPHLRATCFDLPEMEPFFQEHMKSLETTDQVRFAGGDFFTDPLPRADVFIVGHILHYFGLRQREALIARIHQALTPGGAVLVYDRMIDDDRRSAALSLLGSLNMLLTSDEGREYTPAECVRWLSDAGFTDVRTTAVSGPDTLAIGRKPR</sequence>